<keyword id="KW-0472">Membrane</keyword>
<keyword id="KW-1185">Reference proteome</keyword>
<keyword id="KW-0762">Sugar transport</keyword>
<keyword id="KW-0812">Transmembrane</keyword>
<keyword id="KW-1133">Transmembrane helix</keyword>
<keyword id="KW-0813">Transport</keyword>
<dbReference type="EMBL" id="AC009400">
    <property type="protein sequence ID" value="AAF02813.1"/>
    <property type="molecule type" value="Genomic_DNA"/>
</dbReference>
<dbReference type="EMBL" id="CP002686">
    <property type="protein sequence ID" value="AEE74884.1"/>
    <property type="molecule type" value="Genomic_DNA"/>
</dbReference>
<dbReference type="RefSeq" id="NP_187640.1">
    <property type="nucleotide sequence ID" value="NM_111864.4"/>
</dbReference>
<dbReference type="SMR" id="Q9SS40"/>
<dbReference type="BioGRID" id="5525">
    <property type="interactions" value="3"/>
</dbReference>
<dbReference type="FunCoup" id="Q9SS40">
    <property type="interactions" value="114"/>
</dbReference>
<dbReference type="IntAct" id="Q9SS40">
    <property type="interactions" value="3"/>
</dbReference>
<dbReference type="PaxDb" id="3702-AT3G10290.1"/>
<dbReference type="ProteomicsDB" id="248837"/>
<dbReference type="EnsemblPlants" id="AT3G10290.1">
    <property type="protein sequence ID" value="AT3G10290.1"/>
    <property type="gene ID" value="AT3G10290"/>
</dbReference>
<dbReference type="GeneID" id="820191"/>
<dbReference type="Gramene" id="AT3G10290.1">
    <property type="protein sequence ID" value="AT3G10290.1"/>
    <property type="gene ID" value="AT3G10290"/>
</dbReference>
<dbReference type="KEGG" id="ath:AT3G10290"/>
<dbReference type="Araport" id="AT3G10290"/>
<dbReference type="TAIR" id="AT3G10290"/>
<dbReference type="eggNOG" id="KOG1441">
    <property type="taxonomic scope" value="Eukaryota"/>
</dbReference>
<dbReference type="HOGENOM" id="CLU_022332_2_1_1"/>
<dbReference type="InParanoid" id="Q9SS40"/>
<dbReference type="OMA" id="CHMAACA"/>
<dbReference type="OrthoDB" id="10261634at2759"/>
<dbReference type="PhylomeDB" id="Q9SS40"/>
<dbReference type="PRO" id="PR:Q9SS40"/>
<dbReference type="Proteomes" id="UP000006548">
    <property type="component" value="Chromosome 3"/>
</dbReference>
<dbReference type="ExpressionAtlas" id="Q9SS40">
    <property type="expression patterns" value="baseline and differential"/>
</dbReference>
<dbReference type="GO" id="GO:0016020">
    <property type="term" value="C:membrane"/>
    <property type="evidence" value="ECO:0007669"/>
    <property type="project" value="UniProtKB-SubCell"/>
</dbReference>
<dbReference type="InterPro" id="IPR004853">
    <property type="entry name" value="Sugar_P_trans_dom"/>
</dbReference>
<dbReference type="InterPro" id="IPR050186">
    <property type="entry name" value="TPT_transporter"/>
</dbReference>
<dbReference type="PANTHER" id="PTHR11132">
    <property type="entry name" value="SOLUTE CARRIER FAMILY 35"/>
    <property type="match status" value="1"/>
</dbReference>
<dbReference type="Pfam" id="PF03151">
    <property type="entry name" value="TPT"/>
    <property type="match status" value="1"/>
</dbReference>
<dbReference type="SUPFAM" id="SSF103481">
    <property type="entry name" value="Multidrug resistance efflux transporter EmrE"/>
    <property type="match status" value="1"/>
</dbReference>
<sequence length="355" mass="38954">MSSHARGKELIPLLSFSHQKKQPNLSISSTTKMNKKNPDQKSDMSSSSSSPKKQTLFISSLIILWYTSNIGVLLLNKFLLSNYGFKFPIFLTMCHMSACAILSYVSIVFLKLVPLQYLKSRSQFLKVATLSIVFCASVVGGNISLRYLPVSFNQAVGATTPFFTALFAYIMTFKREAWVTYGALVPVVTGVVIASGGEPGFHWFGFIMCISATAARAFKSVLQGILLSSEGERLNSMNLMLYMSPIAVIALLPVTIFMEPDVMSVTLTLGRQHKYMYILLLVNSVMAYSANLLNFLVTKHTSALTLQVLGNAKGAVAVVISILLFRNPVTVMGIGGYSITVLGVVAYGETKRRFR</sequence>
<accession>Q9SS40</accession>
<reference key="1">
    <citation type="journal article" date="2000" name="Nature">
        <title>Sequence and analysis of chromosome 3 of the plant Arabidopsis thaliana.</title>
        <authorList>
            <person name="Salanoubat M."/>
            <person name="Lemcke K."/>
            <person name="Rieger M."/>
            <person name="Ansorge W."/>
            <person name="Unseld M."/>
            <person name="Fartmann B."/>
            <person name="Valle G."/>
            <person name="Bloecker H."/>
            <person name="Perez-Alonso M."/>
            <person name="Obermaier B."/>
            <person name="Delseny M."/>
            <person name="Boutry M."/>
            <person name="Grivell L.A."/>
            <person name="Mache R."/>
            <person name="Puigdomenech P."/>
            <person name="De Simone V."/>
            <person name="Choisne N."/>
            <person name="Artiguenave F."/>
            <person name="Robert C."/>
            <person name="Brottier P."/>
            <person name="Wincker P."/>
            <person name="Cattolico L."/>
            <person name="Weissenbach J."/>
            <person name="Saurin W."/>
            <person name="Quetier F."/>
            <person name="Schaefer M."/>
            <person name="Mueller-Auer S."/>
            <person name="Gabel C."/>
            <person name="Fuchs M."/>
            <person name="Benes V."/>
            <person name="Wurmbach E."/>
            <person name="Drzonek H."/>
            <person name="Erfle H."/>
            <person name="Jordan N."/>
            <person name="Bangert S."/>
            <person name="Wiedelmann R."/>
            <person name="Kranz H."/>
            <person name="Voss H."/>
            <person name="Holland R."/>
            <person name="Brandt P."/>
            <person name="Nyakatura G."/>
            <person name="Vezzi A."/>
            <person name="D'Angelo M."/>
            <person name="Pallavicini A."/>
            <person name="Toppo S."/>
            <person name="Simionati B."/>
            <person name="Conrad A."/>
            <person name="Hornischer K."/>
            <person name="Kauer G."/>
            <person name="Loehnert T.-H."/>
            <person name="Nordsiek G."/>
            <person name="Reichelt J."/>
            <person name="Scharfe M."/>
            <person name="Schoen O."/>
            <person name="Bargues M."/>
            <person name="Terol J."/>
            <person name="Climent J."/>
            <person name="Navarro P."/>
            <person name="Collado C."/>
            <person name="Perez-Perez A."/>
            <person name="Ottenwaelder B."/>
            <person name="Duchemin D."/>
            <person name="Cooke R."/>
            <person name="Laudie M."/>
            <person name="Berger-Llauro C."/>
            <person name="Purnelle B."/>
            <person name="Masuy D."/>
            <person name="de Haan M."/>
            <person name="Maarse A.C."/>
            <person name="Alcaraz J.-P."/>
            <person name="Cottet A."/>
            <person name="Casacuberta E."/>
            <person name="Monfort A."/>
            <person name="Argiriou A."/>
            <person name="Flores M."/>
            <person name="Liguori R."/>
            <person name="Vitale D."/>
            <person name="Mannhaupt G."/>
            <person name="Haase D."/>
            <person name="Schoof H."/>
            <person name="Rudd S."/>
            <person name="Zaccaria P."/>
            <person name="Mewes H.-W."/>
            <person name="Mayer K.F.X."/>
            <person name="Kaul S."/>
            <person name="Town C.D."/>
            <person name="Koo H.L."/>
            <person name="Tallon L.J."/>
            <person name="Jenkins J."/>
            <person name="Rooney T."/>
            <person name="Rizzo M."/>
            <person name="Walts A."/>
            <person name="Utterback T."/>
            <person name="Fujii C.Y."/>
            <person name="Shea T.P."/>
            <person name="Creasy T.H."/>
            <person name="Haas B."/>
            <person name="Maiti R."/>
            <person name="Wu D."/>
            <person name="Peterson J."/>
            <person name="Van Aken S."/>
            <person name="Pai G."/>
            <person name="Militscher J."/>
            <person name="Sellers P."/>
            <person name="Gill J.E."/>
            <person name="Feldblyum T.V."/>
            <person name="Preuss D."/>
            <person name="Lin X."/>
            <person name="Nierman W.C."/>
            <person name="Salzberg S.L."/>
            <person name="White O."/>
            <person name="Venter J.C."/>
            <person name="Fraser C.M."/>
            <person name="Kaneko T."/>
            <person name="Nakamura Y."/>
            <person name="Sato S."/>
            <person name="Kato T."/>
            <person name="Asamizu E."/>
            <person name="Sasamoto S."/>
            <person name="Kimura T."/>
            <person name="Idesawa K."/>
            <person name="Kawashima K."/>
            <person name="Kishida Y."/>
            <person name="Kiyokawa C."/>
            <person name="Kohara M."/>
            <person name="Matsumoto M."/>
            <person name="Matsuno A."/>
            <person name="Muraki A."/>
            <person name="Nakayama S."/>
            <person name="Nakazaki N."/>
            <person name="Shinpo S."/>
            <person name="Takeuchi C."/>
            <person name="Wada T."/>
            <person name="Watanabe A."/>
            <person name="Yamada M."/>
            <person name="Yasuda M."/>
            <person name="Tabata S."/>
        </authorList>
    </citation>
    <scope>NUCLEOTIDE SEQUENCE [LARGE SCALE GENOMIC DNA]</scope>
    <source>
        <strain>cv. Columbia</strain>
    </source>
</reference>
<reference key="2">
    <citation type="journal article" date="2017" name="Plant J.">
        <title>Araport11: a complete reannotation of the Arabidopsis thaliana reference genome.</title>
        <authorList>
            <person name="Cheng C.Y."/>
            <person name="Krishnakumar V."/>
            <person name="Chan A.P."/>
            <person name="Thibaud-Nissen F."/>
            <person name="Schobel S."/>
            <person name="Town C.D."/>
        </authorList>
    </citation>
    <scope>GENOME REANNOTATION</scope>
    <source>
        <strain>cv. Columbia</strain>
    </source>
</reference>
<reference key="3">
    <citation type="journal article" date="2014" name="Proc. Natl. Acad. Sci. U.S.A.">
        <title>The Golgi localized bifunctional UDP-rhamnose/UDP-galactose transporter family of Arabidopsis.</title>
        <authorList>
            <person name="Rautengarten C."/>
            <person name="Ebert B."/>
            <person name="Moreno I."/>
            <person name="Temple H."/>
            <person name="Herter T."/>
            <person name="Link B."/>
            <person name="Donas-Cofre D."/>
            <person name="Moreno A."/>
            <person name="Saez-Aguayo S."/>
            <person name="Blanco F."/>
            <person name="Mortimer J.C."/>
            <person name="Schultink A."/>
            <person name="Reiter W.D."/>
            <person name="Dupree P."/>
            <person name="Pauly M."/>
            <person name="Heazlewood J.L."/>
            <person name="Scheller H.V."/>
            <person name="Orellana A."/>
        </authorList>
    </citation>
    <scope>GENE FAMILY</scope>
</reference>
<name>PT310_ARATH</name>
<gene>
    <name type="ordered locus">At3g10290</name>
    <name type="ORF">F14P13.11</name>
</gene>
<feature type="chain" id="PRO_0000406110" description="Probable sugar phosphate/phosphate translocator At3g10290">
    <location>
        <begin position="1"/>
        <end position="355"/>
    </location>
</feature>
<feature type="transmembrane region" description="Helical" evidence="1">
    <location>
        <begin position="55"/>
        <end position="75"/>
    </location>
</feature>
<feature type="transmembrane region" description="Helical" evidence="1">
    <location>
        <begin position="89"/>
        <end position="109"/>
    </location>
</feature>
<feature type="transmembrane region" description="Helical" evidence="1">
    <location>
        <begin position="124"/>
        <end position="144"/>
    </location>
</feature>
<feature type="transmembrane region" description="Helical" evidence="1">
    <location>
        <begin position="150"/>
        <end position="170"/>
    </location>
</feature>
<feature type="transmembrane region" description="Helical" evidence="1">
    <location>
        <begin position="177"/>
        <end position="197"/>
    </location>
</feature>
<feature type="transmembrane region" description="Helical" evidence="1">
    <location>
        <begin position="198"/>
        <end position="218"/>
    </location>
</feature>
<feature type="transmembrane region" description="Helical" evidence="1">
    <location>
        <begin position="239"/>
        <end position="259"/>
    </location>
</feature>
<feature type="transmembrane region" description="Helical" evidence="1">
    <location>
        <begin position="277"/>
        <end position="297"/>
    </location>
</feature>
<feature type="transmembrane region" description="Helical" evidence="1">
    <location>
        <begin position="305"/>
        <end position="325"/>
    </location>
</feature>
<feature type="transmembrane region" description="Helical" evidence="1">
    <location>
        <begin position="328"/>
        <end position="348"/>
    </location>
</feature>
<feature type="region of interest" description="Disordered" evidence="2">
    <location>
        <begin position="19"/>
        <end position="51"/>
    </location>
</feature>
<feature type="compositionally biased region" description="Polar residues" evidence="2">
    <location>
        <begin position="22"/>
        <end position="32"/>
    </location>
</feature>
<proteinExistence type="inferred from homology"/>
<protein>
    <recommendedName>
        <fullName>Probable sugar phosphate/phosphate translocator At3g10290</fullName>
    </recommendedName>
</protein>
<comment type="subcellular location">
    <subcellularLocation>
        <location evidence="3">Membrane</location>
        <topology evidence="3">Multi-pass membrane protein</topology>
    </subcellularLocation>
</comment>
<comment type="similarity">
    <text evidence="3">Belongs to the TPT transporter family. TPT (TC 2.A.7.9) subfamily.</text>
</comment>
<organism>
    <name type="scientific">Arabidopsis thaliana</name>
    <name type="common">Mouse-ear cress</name>
    <dbReference type="NCBI Taxonomy" id="3702"/>
    <lineage>
        <taxon>Eukaryota</taxon>
        <taxon>Viridiplantae</taxon>
        <taxon>Streptophyta</taxon>
        <taxon>Embryophyta</taxon>
        <taxon>Tracheophyta</taxon>
        <taxon>Spermatophyta</taxon>
        <taxon>Magnoliopsida</taxon>
        <taxon>eudicotyledons</taxon>
        <taxon>Gunneridae</taxon>
        <taxon>Pentapetalae</taxon>
        <taxon>rosids</taxon>
        <taxon>malvids</taxon>
        <taxon>Brassicales</taxon>
        <taxon>Brassicaceae</taxon>
        <taxon>Camelineae</taxon>
        <taxon>Arabidopsis</taxon>
    </lineage>
</organism>
<evidence type="ECO:0000255" key="1"/>
<evidence type="ECO:0000256" key="2">
    <source>
        <dbReference type="SAM" id="MobiDB-lite"/>
    </source>
</evidence>
<evidence type="ECO:0000305" key="3"/>